<dbReference type="EMBL" id="AE016823">
    <property type="protein sequence ID" value="AAS71263.1"/>
    <property type="status" value="ALT_INIT"/>
    <property type="molecule type" value="Genomic_DNA"/>
</dbReference>
<dbReference type="RefSeq" id="WP_000389641.1">
    <property type="nucleotide sequence ID" value="NC_005823.1"/>
</dbReference>
<dbReference type="SMR" id="Q72NX3"/>
<dbReference type="GeneID" id="61142585"/>
<dbReference type="KEGG" id="lic:LIC_12705"/>
<dbReference type="HOGENOM" id="CLU_006301_5_1_12"/>
<dbReference type="Proteomes" id="UP000007037">
    <property type="component" value="Chromosome I"/>
</dbReference>
<dbReference type="GO" id="GO:0005829">
    <property type="term" value="C:cytosol"/>
    <property type="evidence" value="ECO:0007669"/>
    <property type="project" value="TreeGrafter"/>
</dbReference>
<dbReference type="GO" id="GO:0005525">
    <property type="term" value="F:GTP binding"/>
    <property type="evidence" value="ECO:0007669"/>
    <property type="project" value="UniProtKB-KW"/>
</dbReference>
<dbReference type="GO" id="GO:0003924">
    <property type="term" value="F:GTPase activity"/>
    <property type="evidence" value="ECO:0007669"/>
    <property type="project" value="UniProtKB-UniRule"/>
</dbReference>
<dbReference type="GO" id="GO:0003743">
    <property type="term" value="F:translation initiation factor activity"/>
    <property type="evidence" value="ECO:0007669"/>
    <property type="project" value="UniProtKB-UniRule"/>
</dbReference>
<dbReference type="CDD" id="cd01887">
    <property type="entry name" value="IF2_eIF5B"/>
    <property type="match status" value="1"/>
</dbReference>
<dbReference type="CDD" id="cd03702">
    <property type="entry name" value="IF2_mtIF2_II"/>
    <property type="match status" value="1"/>
</dbReference>
<dbReference type="CDD" id="cd03692">
    <property type="entry name" value="mtIF2_IVc"/>
    <property type="match status" value="1"/>
</dbReference>
<dbReference type="FunFam" id="2.40.30.10:FF:000008">
    <property type="entry name" value="Translation initiation factor IF-2"/>
    <property type="match status" value="1"/>
</dbReference>
<dbReference type="FunFam" id="2.40.30.10:FF:000054">
    <property type="entry name" value="Translation initiation factor IF-2"/>
    <property type="match status" value="1"/>
</dbReference>
<dbReference type="FunFam" id="3.40.50.10050:FF:000001">
    <property type="entry name" value="Translation initiation factor IF-2"/>
    <property type="match status" value="1"/>
</dbReference>
<dbReference type="FunFam" id="3.40.50.300:FF:000019">
    <property type="entry name" value="Translation initiation factor IF-2"/>
    <property type="match status" value="1"/>
</dbReference>
<dbReference type="Gene3D" id="3.40.50.300">
    <property type="entry name" value="P-loop containing nucleotide triphosphate hydrolases"/>
    <property type="match status" value="1"/>
</dbReference>
<dbReference type="Gene3D" id="2.40.30.10">
    <property type="entry name" value="Translation factors"/>
    <property type="match status" value="2"/>
</dbReference>
<dbReference type="Gene3D" id="3.40.50.10050">
    <property type="entry name" value="Translation initiation factor IF- 2, domain 3"/>
    <property type="match status" value="1"/>
</dbReference>
<dbReference type="HAMAP" id="MF_00100_B">
    <property type="entry name" value="IF_2_B"/>
    <property type="match status" value="1"/>
</dbReference>
<dbReference type="InterPro" id="IPR053905">
    <property type="entry name" value="EF-G-like_DII"/>
</dbReference>
<dbReference type="InterPro" id="IPR004161">
    <property type="entry name" value="EFTu-like_2"/>
</dbReference>
<dbReference type="InterPro" id="IPR044145">
    <property type="entry name" value="IF2_II"/>
</dbReference>
<dbReference type="InterPro" id="IPR006847">
    <property type="entry name" value="IF2_N"/>
</dbReference>
<dbReference type="InterPro" id="IPR027417">
    <property type="entry name" value="P-loop_NTPase"/>
</dbReference>
<dbReference type="InterPro" id="IPR005225">
    <property type="entry name" value="Small_GTP-bd"/>
</dbReference>
<dbReference type="InterPro" id="IPR000795">
    <property type="entry name" value="T_Tr_GTP-bd_dom"/>
</dbReference>
<dbReference type="InterPro" id="IPR000178">
    <property type="entry name" value="TF_IF2_bacterial-like"/>
</dbReference>
<dbReference type="InterPro" id="IPR015760">
    <property type="entry name" value="TIF_IF2"/>
</dbReference>
<dbReference type="InterPro" id="IPR023115">
    <property type="entry name" value="TIF_IF2_dom3"/>
</dbReference>
<dbReference type="InterPro" id="IPR036925">
    <property type="entry name" value="TIF_IF2_dom3_sf"/>
</dbReference>
<dbReference type="InterPro" id="IPR009000">
    <property type="entry name" value="Transl_B-barrel_sf"/>
</dbReference>
<dbReference type="NCBIfam" id="TIGR00487">
    <property type="entry name" value="IF-2"/>
    <property type="match status" value="1"/>
</dbReference>
<dbReference type="NCBIfam" id="TIGR00231">
    <property type="entry name" value="small_GTP"/>
    <property type="match status" value="1"/>
</dbReference>
<dbReference type="PANTHER" id="PTHR43381:SF5">
    <property type="entry name" value="TR-TYPE G DOMAIN-CONTAINING PROTEIN"/>
    <property type="match status" value="1"/>
</dbReference>
<dbReference type="PANTHER" id="PTHR43381">
    <property type="entry name" value="TRANSLATION INITIATION FACTOR IF-2-RELATED"/>
    <property type="match status" value="1"/>
</dbReference>
<dbReference type="Pfam" id="PF22042">
    <property type="entry name" value="EF-G_D2"/>
    <property type="match status" value="1"/>
</dbReference>
<dbReference type="Pfam" id="PF00009">
    <property type="entry name" value="GTP_EFTU"/>
    <property type="match status" value="1"/>
</dbReference>
<dbReference type="Pfam" id="PF03144">
    <property type="entry name" value="GTP_EFTU_D2"/>
    <property type="match status" value="1"/>
</dbReference>
<dbReference type="Pfam" id="PF11987">
    <property type="entry name" value="IF-2"/>
    <property type="match status" value="1"/>
</dbReference>
<dbReference type="Pfam" id="PF04760">
    <property type="entry name" value="IF2_N"/>
    <property type="match status" value="1"/>
</dbReference>
<dbReference type="SUPFAM" id="SSF52156">
    <property type="entry name" value="Initiation factor IF2/eIF5b, domain 3"/>
    <property type="match status" value="1"/>
</dbReference>
<dbReference type="SUPFAM" id="SSF52540">
    <property type="entry name" value="P-loop containing nucleoside triphosphate hydrolases"/>
    <property type="match status" value="1"/>
</dbReference>
<dbReference type="SUPFAM" id="SSF50447">
    <property type="entry name" value="Translation proteins"/>
    <property type="match status" value="2"/>
</dbReference>
<dbReference type="PROSITE" id="PS51722">
    <property type="entry name" value="G_TR_2"/>
    <property type="match status" value="1"/>
</dbReference>
<dbReference type="PROSITE" id="PS01176">
    <property type="entry name" value="IF2"/>
    <property type="match status" value="1"/>
</dbReference>
<proteinExistence type="inferred from homology"/>
<comment type="function">
    <text evidence="2">One of the essential components for the initiation of protein synthesis. Protects formylmethionyl-tRNA from spontaneous hydrolysis and promotes its binding to the 30S ribosomal subunits. Also involved in the hydrolysis of GTP during the formation of the 70S ribosomal complex.</text>
</comment>
<comment type="subcellular location">
    <subcellularLocation>
        <location evidence="2">Cytoplasm</location>
    </subcellularLocation>
</comment>
<comment type="similarity">
    <text evidence="2">Belongs to the TRAFAC class translation factor GTPase superfamily. Classic translation factor GTPase family. IF-2 subfamily.</text>
</comment>
<comment type="sequence caution" evidence="4">
    <conflict type="erroneous initiation">
        <sequence resource="EMBL-CDS" id="AAS71263"/>
    </conflict>
    <text>Extended N-terminus.</text>
</comment>
<evidence type="ECO:0000250" key="1"/>
<evidence type="ECO:0000255" key="2">
    <source>
        <dbReference type="HAMAP-Rule" id="MF_00100"/>
    </source>
</evidence>
<evidence type="ECO:0000256" key="3">
    <source>
        <dbReference type="SAM" id="MobiDB-lite"/>
    </source>
</evidence>
<evidence type="ECO:0000305" key="4"/>
<gene>
    <name evidence="2" type="primary">infB</name>
    <name type="ordered locus">LIC_12705</name>
</gene>
<accession>Q72NX3</accession>
<sequence length="874" mass="92994">MEDKNKTIKETLQGSADAGKRKKLIIKKKGDDPSTPSPAASPKKETVAESAPSSKPPVMPLPLPGDSGQSPIVRPAPSSHSPAKREESPGKQDAGRPPRDKDTRQGGGSSYPPSRSPFQKEDSNIIVSRPIQRTGPSRPNSGGGYQGNRGPGQGGGGYQGNRGPGQGGGGYQGNRGPGQGGGGYQGNRGPGQGGGGYQGNRGPGQGGGGYQGNRGPRSGGTGTRPMPITSAEVELSQSRGSSVTSKKKGHDKEKSTSDRDFSGAENTKFFKQKFKKTKVVGVSGVSVPKEITLLENVQVGELAKKMNLKPGDVIGKLMKMGMMVTINNIIDAETAALLADEYGCKVKVVSLYEETIIEEEKDNQEDYINRPPVVTIMGHVDHGKTKLLDTIRRSSVIDTESGGITQHIGAYQVRTARGLITFLDTPGHEAFTSMRARGAKVTDIVVLVVAADDGVMPQTLEAISHAKAAEVPILVAINKIDLPAANPEKIMQELANHGLQSEEWGGETMYAKISARENIGIDKLLEMILLQAEVMDLKANPKRRAKGTIIEAKLDPGRGSVATVLIQNGTLRVGDPFVAGVFSGRVRAMYNDLGQLIQEAGPAFPAQVTGIDGVPDAGAPFDAMADEKEARNISQHRIEFERIGNAGAATGTSSKVTLENMNEFIKQGALKELKVIIKADVRGSAEAIKESLEKLSTPEVKLNVIQSGAGAIVDMDVMLASASNALIIGFHVRANPKTIALAEKEGVQIKYYNIIYQVVDEIKLAMEGLLEPEKIEEVIGTAEIREIFKVSKIGNIAGCMVLSGKIQKSANIRVIGDGVTKFEGKLKSLKRVKDDVNDVVAGFECGIQVDGYNDFKVGDTIEAYNVTVIKRKLE</sequence>
<name>IF2_LEPIC</name>
<organism>
    <name type="scientific">Leptospira interrogans serogroup Icterohaemorrhagiae serovar copenhageni (strain Fiocruz L1-130)</name>
    <dbReference type="NCBI Taxonomy" id="267671"/>
    <lineage>
        <taxon>Bacteria</taxon>
        <taxon>Pseudomonadati</taxon>
        <taxon>Spirochaetota</taxon>
        <taxon>Spirochaetia</taxon>
        <taxon>Leptospirales</taxon>
        <taxon>Leptospiraceae</taxon>
        <taxon>Leptospira</taxon>
    </lineage>
</organism>
<feature type="chain" id="PRO_0000137215" description="Translation initiation factor IF-2">
    <location>
        <begin position="1"/>
        <end position="874"/>
    </location>
</feature>
<feature type="domain" description="tr-type G">
    <location>
        <begin position="369"/>
        <end position="538"/>
    </location>
</feature>
<feature type="region of interest" description="Disordered" evidence="3">
    <location>
        <begin position="1"/>
        <end position="262"/>
    </location>
</feature>
<feature type="region of interest" description="G1" evidence="1">
    <location>
        <begin position="378"/>
        <end position="385"/>
    </location>
</feature>
<feature type="region of interest" description="G2" evidence="1">
    <location>
        <begin position="403"/>
        <end position="407"/>
    </location>
</feature>
<feature type="region of interest" description="G3" evidence="1">
    <location>
        <begin position="424"/>
        <end position="427"/>
    </location>
</feature>
<feature type="region of interest" description="G4" evidence="1">
    <location>
        <begin position="478"/>
        <end position="481"/>
    </location>
</feature>
<feature type="region of interest" description="G5" evidence="1">
    <location>
        <begin position="514"/>
        <end position="516"/>
    </location>
</feature>
<feature type="compositionally biased region" description="Pro residues" evidence="3">
    <location>
        <begin position="54"/>
        <end position="63"/>
    </location>
</feature>
<feature type="compositionally biased region" description="Basic and acidic residues" evidence="3">
    <location>
        <begin position="83"/>
        <end position="104"/>
    </location>
</feature>
<feature type="compositionally biased region" description="Gly residues" evidence="3">
    <location>
        <begin position="141"/>
        <end position="222"/>
    </location>
</feature>
<feature type="compositionally biased region" description="Polar residues" evidence="3">
    <location>
        <begin position="235"/>
        <end position="244"/>
    </location>
</feature>
<feature type="compositionally biased region" description="Basic and acidic residues" evidence="3">
    <location>
        <begin position="250"/>
        <end position="262"/>
    </location>
</feature>
<feature type="binding site" evidence="2">
    <location>
        <begin position="378"/>
        <end position="385"/>
    </location>
    <ligand>
        <name>GTP</name>
        <dbReference type="ChEBI" id="CHEBI:37565"/>
    </ligand>
</feature>
<feature type="binding site" evidence="2">
    <location>
        <begin position="424"/>
        <end position="428"/>
    </location>
    <ligand>
        <name>GTP</name>
        <dbReference type="ChEBI" id="CHEBI:37565"/>
    </ligand>
</feature>
<feature type="binding site" evidence="2">
    <location>
        <begin position="478"/>
        <end position="481"/>
    </location>
    <ligand>
        <name>GTP</name>
        <dbReference type="ChEBI" id="CHEBI:37565"/>
    </ligand>
</feature>
<protein>
    <recommendedName>
        <fullName evidence="2">Translation initiation factor IF-2</fullName>
    </recommendedName>
</protein>
<keyword id="KW-0963">Cytoplasm</keyword>
<keyword id="KW-0342">GTP-binding</keyword>
<keyword id="KW-0396">Initiation factor</keyword>
<keyword id="KW-0547">Nucleotide-binding</keyword>
<keyword id="KW-0648">Protein biosynthesis</keyword>
<reference key="1">
    <citation type="journal article" date="2004" name="J. Bacteriol.">
        <title>Comparative genomics of two Leptospira interrogans serovars reveals novel insights into physiology and pathogenesis.</title>
        <authorList>
            <person name="Nascimento A.L.T.O."/>
            <person name="Ko A.I."/>
            <person name="Martins E.A.L."/>
            <person name="Monteiro-Vitorello C.B."/>
            <person name="Ho P.L."/>
            <person name="Haake D.A."/>
            <person name="Verjovski-Almeida S."/>
            <person name="Hartskeerl R.A."/>
            <person name="Marques M.V."/>
            <person name="Oliveira M.C."/>
            <person name="Menck C.F.M."/>
            <person name="Leite L.C.C."/>
            <person name="Carrer H."/>
            <person name="Coutinho L.L."/>
            <person name="Degrave W.M."/>
            <person name="Dellagostin O.A."/>
            <person name="El-Dorry H."/>
            <person name="Ferro E.S."/>
            <person name="Ferro M.I.T."/>
            <person name="Furlan L.R."/>
            <person name="Gamberini M."/>
            <person name="Giglioti E.A."/>
            <person name="Goes-Neto A."/>
            <person name="Goldman G.H."/>
            <person name="Goldman M.H.S."/>
            <person name="Harakava R."/>
            <person name="Jeronimo S.M.B."/>
            <person name="Junqueira-de-Azevedo I.L.M."/>
            <person name="Kimura E.T."/>
            <person name="Kuramae E.E."/>
            <person name="Lemos E.G.M."/>
            <person name="Lemos M.V.F."/>
            <person name="Marino C.L."/>
            <person name="Nunes L.R."/>
            <person name="de Oliveira R.C."/>
            <person name="Pereira G.G."/>
            <person name="Reis M.S."/>
            <person name="Schriefer A."/>
            <person name="Siqueira W.J."/>
            <person name="Sommer P."/>
            <person name="Tsai S.M."/>
            <person name="Simpson A.J.G."/>
            <person name="Ferro J.A."/>
            <person name="Camargo L.E.A."/>
            <person name="Kitajima J.P."/>
            <person name="Setubal J.C."/>
            <person name="Van Sluys M.A."/>
        </authorList>
    </citation>
    <scope>NUCLEOTIDE SEQUENCE [LARGE SCALE GENOMIC DNA]</scope>
    <source>
        <strain>Fiocruz L1-130</strain>
    </source>
</reference>